<comment type="function">
    <text evidence="1 3 5 6 8">Functions as an intracellular leucine sensor that negatively regulates the mTORC1 signaling pathway through the GATOR complex (PubMed:18692468, PubMed:25259925). In absence of leucine, binds the GATOR subcomplex GATOR2 and prevents mTORC1 signaling (PubMed:18692468, PubMed:25259925). Binding of leucine to SESN2 disrupts its interaction with GATOR2 thereby activating the TORC1 signaling pathway (PubMed:18692468, PubMed:25259925). This stress-inducible metabolic regulator also plays a role in protection against oxidative and genotoxic stresses (By similarity). May negatively regulate protein translation in response to endoplasmic reticulum stress, via mTORC1 (PubMed:24947615). May positively regulate the transcription by NFE2L2 of genes involved in the response to oxidative stress by facilitating the SQSTM1-mediated autophagic degradation of KEAP1 (PubMed:23274085). May also mediate TP53 inhibition of TORC1 signaling upon genotoxic stress (PubMed:18692468). Moreover, may prevent the accumulation of reactive oxygen species (ROS) through the alkylhydroperoxide reductase activity born by the N-terminal domain of the protein (By similarity). Was originally reported to contribute to oxidative stress resistance by reducing PRDX1. However, this could not be confirmed (By similarity).</text>
</comment>
<comment type="catalytic activity">
    <reaction evidence="1">
        <text>a hydroperoxide + L-cysteinyl-[protein] = S-hydroxy-L-cysteinyl-[protein] + an alcohol</text>
        <dbReference type="Rhea" id="RHEA:67124"/>
        <dbReference type="Rhea" id="RHEA-COMP:10131"/>
        <dbReference type="Rhea" id="RHEA-COMP:17193"/>
        <dbReference type="ChEBI" id="CHEBI:29950"/>
        <dbReference type="ChEBI" id="CHEBI:30879"/>
        <dbReference type="ChEBI" id="CHEBI:35924"/>
        <dbReference type="ChEBI" id="CHEBI:61973"/>
    </reaction>
    <physiologicalReaction direction="left-to-right" evidence="1">
        <dbReference type="Rhea" id="RHEA:67125"/>
    </physiologicalReaction>
</comment>
<comment type="subunit">
    <text evidence="1 3 7 8 9">Interacts with the GATOR2 complex which is composed of MIOS, SEC13, SEH1L, WDR24 and WDR59; the interaction is negatively regulated by leucine (By similarity). Conveys leucine availability via direct interaction with SEH1L and WDR24 components of the GATOR2 complex (By similarity). Interacts with RRAGA, RRAGB, RRAGC and RRAGD; may function as a guanine nucleotide dissociation inhibitor for RRAGs and regulate them (PubMed:25259925). May interact with the TORC2 complex (PubMed:25377878). Interacts with KEAP1, RBX1, SQSTM and ULK1; to regulate the degradation of KEAP1 (PubMed:25040165). May also associate with the complex composed of TSC1, TSC2 and the AMP-responsive protein kinase/AMPK to regulate TORC1 signaling (PubMed:18692468). May interact with PRDX1 (By similarity).</text>
</comment>
<comment type="subcellular location">
    <subcellularLocation>
        <location evidence="1">Cytoplasm</location>
    </subcellularLocation>
</comment>
<comment type="tissue specificity">
    <text evidence="8">Detected in heart, liver and skeletal muscles (at protein level).</text>
</comment>
<comment type="induction">
    <text evidence="6">Up-regulated by treatments inducing endoplasmic reticulum stress.</text>
</comment>
<comment type="domain">
    <text evidence="1">The N-terminal domain has an alkylhydroperoxide reductase activity.</text>
</comment>
<comment type="domain">
    <text evidence="1">The C-terminal domain mediates interaction with GATOR2 through which it regulates TORC1 signaling.</text>
</comment>
<comment type="PTM">
    <text evidence="1">Phosphorylated by ULK1 at multiple sites.</text>
</comment>
<comment type="PTM">
    <text evidence="1">Ubiquitinated at Lys-175 by RNF167 via 'Lys-63'-linked polyubiquitination in response to leucine deprivation: ubiquitination promotes SESN2-interaction with the GATOR2 complex, leading to inhibit the TORC1 signaling pathway. Deubiquitinated at Lys-175 by STAMBPL1, promoting the TORC1 signaling pathway. Ubiquitinated by RNF186; ubiquitination mediates proteasomal degradation.</text>
</comment>
<comment type="disruption phenotype">
    <text evidence="4 5 6 8">Sesn2 knockout mice are fully viable and do not display any overt developmental abnormalities. When kept on high fat diet, they display higher insulin resistance and glucose intolerance (PubMed:22958918). The oxidative stress induced by acute lipogenesis upon refeeding results in increased liver damages in the Sesn2 knockout mice. Any condition, like obesity, that triggers chronic or acute endoplasmic reticulum stresses have the same consequences in these mice and can lead to liver fibrosis (PubMed:23274085, PubMed:24947615). Sesn2 and Sesn3 double knockout mice display insulin resistance and glucose intolerance (PubMed:22958918). Triple knockout mice lacking Sesn1, Sesn2 and Sesn3 do not display an embryonic lethal phenotype since they are born at an expected Mendelian ratio. Moreover, they are not distinguishable from their wild-type littermates. However, their survival at 10 days is dramatically affected. This is associated with a constitutive activation of TORC1 signaling in the liver, heart and skeletal muscle during postnatal fasting, that occurs between birth and suckling (PubMed:25259925).</text>
</comment>
<comment type="similarity">
    <text evidence="10">Belongs to the sestrin family.</text>
</comment>
<organism>
    <name type="scientific">Mus musculus</name>
    <name type="common">Mouse</name>
    <dbReference type="NCBI Taxonomy" id="10090"/>
    <lineage>
        <taxon>Eukaryota</taxon>
        <taxon>Metazoa</taxon>
        <taxon>Chordata</taxon>
        <taxon>Craniata</taxon>
        <taxon>Vertebrata</taxon>
        <taxon>Euteleostomi</taxon>
        <taxon>Mammalia</taxon>
        <taxon>Eutheria</taxon>
        <taxon>Euarchontoglires</taxon>
        <taxon>Glires</taxon>
        <taxon>Rodentia</taxon>
        <taxon>Myomorpha</taxon>
        <taxon>Muroidea</taxon>
        <taxon>Muridae</taxon>
        <taxon>Murinae</taxon>
        <taxon>Mus</taxon>
        <taxon>Mus</taxon>
    </lineage>
</organism>
<keyword id="KW-0007">Acetylation</keyword>
<keyword id="KW-0963">Cytoplasm</keyword>
<keyword id="KW-1017">Isopeptide bond</keyword>
<keyword id="KW-0560">Oxidoreductase</keyword>
<keyword id="KW-0597">Phosphoprotein</keyword>
<keyword id="KW-1185">Reference proteome</keyword>
<keyword id="KW-0832">Ubl conjugation</keyword>
<name>SESN2_MOUSE</name>
<proteinExistence type="evidence at protein level"/>
<evidence type="ECO:0000250" key="1">
    <source>
        <dbReference type="UniProtKB" id="P58004"/>
    </source>
</evidence>
<evidence type="ECO:0000256" key="2">
    <source>
        <dbReference type="SAM" id="MobiDB-lite"/>
    </source>
</evidence>
<evidence type="ECO:0000269" key="3">
    <source>
    </source>
</evidence>
<evidence type="ECO:0000269" key="4">
    <source>
    </source>
</evidence>
<evidence type="ECO:0000269" key="5">
    <source>
    </source>
</evidence>
<evidence type="ECO:0000269" key="6">
    <source>
    </source>
</evidence>
<evidence type="ECO:0000269" key="7">
    <source>
    </source>
</evidence>
<evidence type="ECO:0000269" key="8">
    <source>
    </source>
</evidence>
<evidence type="ECO:0000269" key="9">
    <source>
    </source>
</evidence>
<evidence type="ECO:0000305" key="10"/>
<evidence type="ECO:0000312" key="11">
    <source>
        <dbReference type="MGI" id="MGI:2651874"/>
    </source>
</evidence>
<protein>
    <recommendedName>
        <fullName evidence="10">Sestrin-2</fullName>
        <ecNumber evidence="1">1.11.1.-</ecNumber>
    </recommendedName>
</protein>
<accession>P58043</accession>
<feature type="chain" id="PRO_0000221182" description="Sestrin-2">
    <location>
        <begin position="1"/>
        <end position="480"/>
    </location>
</feature>
<feature type="region of interest" description="Disordered" evidence="2">
    <location>
        <begin position="20"/>
        <end position="43"/>
    </location>
</feature>
<feature type="region of interest" description="N-terminal domain; mediates the alkylhydroperoxide reductase activity" evidence="1">
    <location>
        <begin position="66"/>
        <end position="239"/>
    </location>
</feature>
<feature type="region of interest" description="Disordered" evidence="2">
    <location>
        <begin position="221"/>
        <end position="251"/>
    </location>
</feature>
<feature type="region of interest" description="Disordered" evidence="2">
    <location>
        <begin position="272"/>
        <end position="291"/>
    </location>
</feature>
<feature type="region of interest" description="C-terminal domain; mediates TORC1 regulation" evidence="1">
    <location>
        <begin position="308"/>
        <end position="480"/>
    </location>
</feature>
<feature type="compositionally biased region" description="Basic and acidic residues" evidence="2">
    <location>
        <begin position="27"/>
        <end position="37"/>
    </location>
</feature>
<feature type="compositionally biased region" description="Low complexity" evidence="2">
    <location>
        <begin position="223"/>
        <end position="238"/>
    </location>
</feature>
<feature type="active site" description="Cysteine sulfenic acid (-SOH) intermediate" evidence="1">
    <location>
        <position position="125"/>
    </location>
</feature>
<feature type="binding site" evidence="1">
    <location>
        <begin position="374"/>
        <end position="377"/>
    </location>
    <ligand>
        <name>L-leucine</name>
        <dbReference type="ChEBI" id="CHEBI:57427"/>
    </ligand>
</feature>
<feature type="binding site" evidence="1">
    <location>
        <position position="386"/>
    </location>
    <ligand>
        <name>L-leucine</name>
        <dbReference type="ChEBI" id="CHEBI:57427"/>
    </ligand>
</feature>
<feature type="binding site" evidence="1">
    <location>
        <position position="451"/>
    </location>
    <ligand>
        <name>L-leucine</name>
        <dbReference type="ChEBI" id="CHEBI:57427"/>
    </ligand>
</feature>
<feature type="modified residue" description="N-acetylmethionine" evidence="1">
    <location>
        <position position="1"/>
    </location>
</feature>
<feature type="modified residue" description="Phosphoserine" evidence="1">
    <location>
        <position position="249"/>
    </location>
</feature>
<feature type="cross-link" description="Glycyl lysine isopeptide (Lys-Gly) (interchain with G-Cter in ubiquitin)" evidence="1">
    <location>
        <position position="175"/>
    </location>
</feature>
<feature type="mutagenesis site" description="Unable to inhibit TORC1 signaling; when associated with A-422 and A-426." evidence="8">
    <original>R</original>
    <variation>A</variation>
    <location>
        <position position="419"/>
    </location>
</feature>
<feature type="mutagenesis site" description="Unable to inhibit TORC1 signaling; when associated with A-419 and A-426." evidence="8">
    <original>K</original>
    <variation>A</variation>
    <location>
        <position position="422"/>
    </location>
</feature>
<feature type="mutagenesis site" description="Unable to inhibit TORC1 signaling; when associated with A-419 and A-422." evidence="8">
    <original>K</original>
    <variation>A</variation>
    <location>
        <position position="426"/>
    </location>
</feature>
<dbReference type="EC" id="1.11.1.-" evidence="1"/>
<dbReference type="EMBL" id="BC005672">
    <property type="protein sequence ID" value="AAH05672.1"/>
    <property type="molecule type" value="mRNA"/>
</dbReference>
<dbReference type="CCDS" id="CCDS18726.1"/>
<dbReference type="RefSeq" id="NP_659156.1">
    <property type="nucleotide sequence ID" value="NM_144907.1"/>
</dbReference>
<dbReference type="SMR" id="P58043"/>
<dbReference type="BioGRID" id="231026">
    <property type="interactions" value="38"/>
</dbReference>
<dbReference type="FunCoup" id="P58043">
    <property type="interactions" value="244"/>
</dbReference>
<dbReference type="IntAct" id="P58043">
    <property type="interactions" value="41"/>
</dbReference>
<dbReference type="MINT" id="P58043"/>
<dbReference type="STRING" id="10090.ENSMUSP00000030724"/>
<dbReference type="iPTMnet" id="P58043"/>
<dbReference type="PhosphoSitePlus" id="P58043"/>
<dbReference type="SwissPalm" id="P58043"/>
<dbReference type="PaxDb" id="10090-ENSMUSP00000030724"/>
<dbReference type="ProteomicsDB" id="255393"/>
<dbReference type="Pumba" id="P58043"/>
<dbReference type="Antibodypedia" id="2971">
    <property type="antibodies" value="287 antibodies from 34 providers"/>
</dbReference>
<dbReference type="DNASU" id="230784"/>
<dbReference type="Ensembl" id="ENSMUST00000030724.9">
    <property type="protein sequence ID" value="ENSMUSP00000030724.9"/>
    <property type="gene ID" value="ENSMUSG00000028893.9"/>
</dbReference>
<dbReference type="GeneID" id="230784"/>
<dbReference type="KEGG" id="mmu:230784"/>
<dbReference type="UCSC" id="uc008vbj.1">
    <property type="organism name" value="mouse"/>
</dbReference>
<dbReference type="AGR" id="MGI:2651874"/>
<dbReference type="CTD" id="83667"/>
<dbReference type="MGI" id="MGI:2651874">
    <property type="gene designation" value="Sesn2"/>
</dbReference>
<dbReference type="VEuPathDB" id="HostDB:ENSMUSG00000028893"/>
<dbReference type="eggNOG" id="KOG3746">
    <property type="taxonomic scope" value="Eukaryota"/>
</dbReference>
<dbReference type="GeneTree" id="ENSGT00950000183168"/>
<dbReference type="HOGENOM" id="CLU_020429_0_0_1"/>
<dbReference type="InParanoid" id="P58043"/>
<dbReference type="OMA" id="HAIIVLC"/>
<dbReference type="OrthoDB" id="337464at2759"/>
<dbReference type="PhylomeDB" id="P58043"/>
<dbReference type="TreeFam" id="TF314230"/>
<dbReference type="Reactome" id="R-MMU-5628897">
    <property type="pathway name" value="TP53 Regulates Metabolic Genes"/>
</dbReference>
<dbReference type="Reactome" id="R-MMU-9639288">
    <property type="pathway name" value="Amino acids regulate mTORC1"/>
</dbReference>
<dbReference type="Reactome" id="R-MMU-9755511">
    <property type="pathway name" value="KEAP1-NFE2L2 pathway"/>
</dbReference>
<dbReference type="BioGRID-ORCS" id="230784">
    <property type="hits" value="1 hit in 76 CRISPR screens"/>
</dbReference>
<dbReference type="ChiTaRS" id="Sesn2">
    <property type="organism name" value="mouse"/>
</dbReference>
<dbReference type="PRO" id="PR:P58043"/>
<dbReference type="Proteomes" id="UP000000589">
    <property type="component" value="Chromosome 4"/>
</dbReference>
<dbReference type="RNAct" id="P58043">
    <property type="molecule type" value="protein"/>
</dbReference>
<dbReference type="Bgee" id="ENSMUSG00000028893">
    <property type="expression patterns" value="Expressed in granulocyte and 150 other cell types or tissues"/>
</dbReference>
<dbReference type="GO" id="GO:1990316">
    <property type="term" value="C:Atg1/ULK1 kinase complex"/>
    <property type="evidence" value="ECO:0000250"/>
    <property type="project" value="UniProtKB"/>
</dbReference>
<dbReference type="GO" id="GO:0061700">
    <property type="term" value="C:GATOR2 complex"/>
    <property type="evidence" value="ECO:0000266"/>
    <property type="project" value="MGI"/>
</dbReference>
<dbReference type="GO" id="GO:0005765">
    <property type="term" value="C:lysosomal membrane"/>
    <property type="evidence" value="ECO:0007669"/>
    <property type="project" value="Ensembl"/>
</dbReference>
<dbReference type="GO" id="GO:0005739">
    <property type="term" value="C:mitochondrion"/>
    <property type="evidence" value="ECO:0007669"/>
    <property type="project" value="GOC"/>
</dbReference>
<dbReference type="GO" id="GO:0005634">
    <property type="term" value="C:nucleus"/>
    <property type="evidence" value="ECO:0007669"/>
    <property type="project" value="InterPro"/>
</dbReference>
<dbReference type="GO" id="GO:0005092">
    <property type="term" value="F:GDP-dissociation inhibitor activity"/>
    <property type="evidence" value="ECO:0000314"/>
    <property type="project" value="UniProtKB"/>
</dbReference>
<dbReference type="GO" id="GO:0070728">
    <property type="term" value="F:L-leucine binding"/>
    <property type="evidence" value="ECO:0000250"/>
    <property type="project" value="UniProtKB"/>
</dbReference>
<dbReference type="GO" id="GO:0004601">
    <property type="term" value="F:peroxidase activity"/>
    <property type="evidence" value="ECO:0000250"/>
    <property type="project" value="UniProtKB"/>
</dbReference>
<dbReference type="GO" id="GO:0042731">
    <property type="term" value="F:PH domain binding"/>
    <property type="evidence" value="ECO:0000353"/>
    <property type="project" value="MGI"/>
</dbReference>
<dbReference type="GO" id="GO:0140311">
    <property type="term" value="F:protein sequestering activity"/>
    <property type="evidence" value="ECO:0000250"/>
    <property type="project" value="UniProtKB"/>
</dbReference>
<dbReference type="GO" id="GO:0044877">
    <property type="term" value="F:protein-containing complex binding"/>
    <property type="evidence" value="ECO:0000250"/>
    <property type="project" value="UniProtKB"/>
</dbReference>
<dbReference type="GO" id="GO:0032542">
    <property type="term" value="F:sulfiredoxin activity"/>
    <property type="evidence" value="ECO:0007669"/>
    <property type="project" value="Ensembl"/>
</dbReference>
<dbReference type="GO" id="GO:0098869">
    <property type="term" value="P:cellular oxidant detoxification"/>
    <property type="evidence" value="ECO:0000250"/>
    <property type="project" value="UniProtKB"/>
</dbReference>
<dbReference type="GO" id="GO:0071230">
    <property type="term" value="P:cellular response to amino acid stimulus"/>
    <property type="evidence" value="ECO:0000315"/>
    <property type="project" value="UniProtKB"/>
</dbReference>
<dbReference type="GO" id="GO:0042149">
    <property type="term" value="P:cellular response to glucose starvation"/>
    <property type="evidence" value="ECO:0007669"/>
    <property type="project" value="Ensembl"/>
</dbReference>
<dbReference type="GO" id="GO:0071233">
    <property type="term" value="P:cellular response to L-leucine"/>
    <property type="evidence" value="ECO:0007669"/>
    <property type="project" value="Ensembl"/>
</dbReference>
<dbReference type="GO" id="GO:1990253">
    <property type="term" value="P:cellular response to leucine starvation"/>
    <property type="evidence" value="ECO:0000250"/>
    <property type="project" value="UniProtKB"/>
</dbReference>
<dbReference type="GO" id="GO:0034599">
    <property type="term" value="P:cellular response to oxidative stress"/>
    <property type="evidence" value="ECO:0000315"/>
    <property type="project" value="UniProtKB"/>
</dbReference>
<dbReference type="GO" id="GO:0046323">
    <property type="term" value="P:D-glucose import"/>
    <property type="evidence" value="ECO:0000315"/>
    <property type="project" value="MGI"/>
</dbReference>
<dbReference type="GO" id="GO:0030330">
    <property type="term" value="P:DNA damage response, signal transduction by p53 class mediator"/>
    <property type="evidence" value="ECO:0000315"/>
    <property type="project" value="UniProtKB"/>
</dbReference>
<dbReference type="GO" id="GO:0006635">
    <property type="term" value="P:fatty acid beta-oxidation"/>
    <property type="evidence" value="ECO:0000316"/>
    <property type="project" value="MGI"/>
</dbReference>
<dbReference type="GO" id="GO:0042593">
    <property type="term" value="P:glucose homeostasis"/>
    <property type="evidence" value="ECO:0000316"/>
    <property type="project" value="MGI"/>
</dbReference>
<dbReference type="GO" id="GO:0032042">
    <property type="term" value="P:mitochondrial DNA metabolic process"/>
    <property type="evidence" value="ECO:0000315"/>
    <property type="project" value="MGI"/>
</dbReference>
<dbReference type="GO" id="GO:0007005">
    <property type="term" value="P:mitochondrion organization"/>
    <property type="evidence" value="ECO:0000315"/>
    <property type="project" value="MGI"/>
</dbReference>
<dbReference type="GO" id="GO:0030308">
    <property type="term" value="P:negative regulation of cell growth"/>
    <property type="evidence" value="ECO:0000314"/>
    <property type="project" value="UniProtKB"/>
</dbReference>
<dbReference type="GO" id="GO:1904262">
    <property type="term" value="P:negative regulation of TORC1 signaling"/>
    <property type="evidence" value="ECO:0000315"/>
    <property type="project" value="UniProtKB"/>
</dbReference>
<dbReference type="GO" id="GO:1902010">
    <property type="term" value="P:negative regulation of translation in response to endoplasmic reticulum stress"/>
    <property type="evidence" value="ECO:0000315"/>
    <property type="project" value="UniProtKB"/>
</dbReference>
<dbReference type="GO" id="GO:1904504">
    <property type="term" value="P:positive regulation of lipophagy"/>
    <property type="evidence" value="ECO:0000315"/>
    <property type="project" value="MGI"/>
</dbReference>
<dbReference type="GO" id="GO:0016239">
    <property type="term" value="P:positive regulation of macroautophagy"/>
    <property type="evidence" value="ECO:0000250"/>
    <property type="project" value="UniProtKB"/>
</dbReference>
<dbReference type="GO" id="GO:0051897">
    <property type="term" value="P:positive regulation of phosphatidylinositol 3-kinase/protein kinase B signal transduction"/>
    <property type="evidence" value="ECO:0000315"/>
    <property type="project" value="MGI"/>
</dbReference>
<dbReference type="GO" id="GO:1900182">
    <property type="term" value="P:positive regulation of protein localization to nucleus"/>
    <property type="evidence" value="ECO:0000250"/>
    <property type="project" value="UniProtKB"/>
</dbReference>
<dbReference type="GO" id="GO:1904263">
    <property type="term" value="P:positive regulation of TORC1 signaling"/>
    <property type="evidence" value="ECO:0007669"/>
    <property type="project" value="Ensembl"/>
</dbReference>
<dbReference type="GO" id="GO:0072659">
    <property type="term" value="P:protein localization to plasma membrane"/>
    <property type="evidence" value="ECO:0000266"/>
    <property type="project" value="MGI"/>
</dbReference>
<dbReference type="GO" id="GO:0072593">
    <property type="term" value="P:reactive oxygen species metabolic process"/>
    <property type="evidence" value="ECO:0000250"/>
    <property type="project" value="UniProtKB"/>
</dbReference>
<dbReference type="GO" id="GO:0141161">
    <property type="term" value="P:regulation of cAMP/PKA signal transduction"/>
    <property type="evidence" value="ECO:0000315"/>
    <property type="project" value="MGI"/>
</dbReference>
<dbReference type="GO" id="GO:0006111">
    <property type="term" value="P:regulation of gluconeogenesis"/>
    <property type="evidence" value="ECO:0000315"/>
    <property type="project" value="MGI"/>
</dbReference>
<dbReference type="GO" id="GO:1901031">
    <property type="term" value="P:regulation of response to reactive oxygen species"/>
    <property type="evidence" value="ECO:0007669"/>
    <property type="project" value="InterPro"/>
</dbReference>
<dbReference type="GO" id="GO:0009749">
    <property type="term" value="P:response to glucose"/>
    <property type="evidence" value="ECO:0000315"/>
    <property type="project" value="MGI"/>
</dbReference>
<dbReference type="GO" id="GO:0032868">
    <property type="term" value="P:response to insulin"/>
    <property type="evidence" value="ECO:0000315"/>
    <property type="project" value="MGI"/>
</dbReference>
<dbReference type="GO" id="GO:0038203">
    <property type="term" value="P:TORC2 signaling"/>
    <property type="evidence" value="ECO:0000266"/>
    <property type="project" value="MGI"/>
</dbReference>
<dbReference type="GO" id="GO:0070328">
    <property type="term" value="P:triglyceride homeostasis"/>
    <property type="evidence" value="ECO:0000315"/>
    <property type="project" value="MGI"/>
</dbReference>
<dbReference type="FunFam" id="1.20.1290.10:FF:000001">
    <property type="entry name" value="Sestrin 1"/>
    <property type="match status" value="1"/>
</dbReference>
<dbReference type="Gene3D" id="1.20.1290.10">
    <property type="entry name" value="AhpD-like"/>
    <property type="match status" value="1"/>
</dbReference>
<dbReference type="InterPro" id="IPR029032">
    <property type="entry name" value="AhpD-like"/>
</dbReference>
<dbReference type="InterPro" id="IPR006730">
    <property type="entry name" value="Sestrin"/>
</dbReference>
<dbReference type="PANTHER" id="PTHR12474">
    <property type="entry name" value="P53 REGULATED PA26 NUCLEAR PROTEIN SESTRIN"/>
    <property type="match status" value="1"/>
</dbReference>
<dbReference type="PANTHER" id="PTHR12474:SF2">
    <property type="entry name" value="SESTRIN-2"/>
    <property type="match status" value="1"/>
</dbReference>
<dbReference type="Pfam" id="PF04636">
    <property type="entry name" value="PA26"/>
    <property type="match status" value="1"/>
</dbReference>
<dbReference type="SUPFAM" id="SSF69118">
    <property type="entry name" value="AhpD-like"/>
    <property type="match status" value="1"/>
</dbReference>
<sequence>MIVADSECHSEIKGYLPFTRGGVAGPETREEHREGQARRGSRGPSAFIPVEEILREGAESLEQHLGLEALMSSGRVDNLAVVMGLHPDYLSSFWRLHYLLLHTDGPLASSWRHYIAIMAAARHQCSYLVGSHMTEFLQTGGDPEWLLGLHRAPEKLRKLSEVNKLLAHRPWLITKEHIQALLKTGEHSWSLAELIQALVLLTHCHSLASFVFGCGILPEGDAEGSPASQAPSPPSEQGTPPSGDPLNNSGGFEAARDVEALMERMRQLQESLLRDEGASQEEMENRFELEKSESLLVTPSADILEPSPHPDILCFVEDPAFGYEDFTRRGTQAPPTFRAQDYTWEDHGYSLIQRLYPEGGQLLDEKFQVACSLTYNTIAMHSGVDTSMLRRAIWNYIHCVFGIRYDDYDYGEVNQLLERNLKIYIKTVACYPEKTTRRMYNLFWRHFRHSEKVHVNLLLLEARMQAALLYALRAITRYMT</sequence>
<gene>
    <name evidence="11" type="primary">Sesn2</name>
</gene>
<reference key="1">
    <citation type="journal article" date="2004" name="Genome Res.">
        <title>The status, quality, and expansion of the NIH full-length cDNA project: the Mammalian Gene Collection (MGC).</title>
        <authorList>
            <consortium name="The MGC Project Team"/>
        </authorList>
    </citation>
    <scope>NUCLEOTIDE SEQUENCE [LARGE SCALE MRNA]</scope>
    <source>
        <strain>DH10B</strain>
        <tissue>Mammary tumor</tissue>
    </source>
</reference>
<reference key="2">
    <citation type="journal article" date="2008" name="Cell">
        <title>p53 target genes sestrin1 and sestrin2 connect genotoxic stress and mTOR signaling.</title>
        <authorList>
            <person name="Budanov A.V."/>
            <person name="Karin M."/>
        </authorList>
    </citation>
    <scope>FUNCTION</scope>
    <scope>INTERACTION WITH TSC1; TSC2 AND AMPK</scope>
</reference>
<reference key="3">
    <citation type="journal article" date="2012" name="Cell Metab.">
        <title>Maintenance of metabolic homeostasis by Sestrin2 and Sestrin3.</title>
        <authorList>
            <person name="Lee J.H."/>
            <person name="Budanov A.V."/>
            <person name="Talukdar S."/>
            <person name="Park E.J."/>
            <person name="Park H.L."/>
            <person name="Park H.W."/>
            <person name="Bandyopadhyay G."/>
            <person name="Li N."/>
            <person name="Aghajan M."/>
            <person name="Jang I."/>
            <person name="Wolfe A.M."/>
            <person name="Perkins G.A."/>
            <person name="Ellisman M.H."/>
            <person name="Bier E."/>
            <person name="Scadeng M."/>
            <person name="Foretz M."/>
            <person name="Viollet B."/>
            <person name="Olefsky J."/>
            <person name="Karin M."/>
        </authorList>
    </citation>
    <scope>DISRUPTION PHENOTYPE</scope>
</reference>
<reference key="4">
    <citation type="journal article" date="2013" name="Cell Metab.">
        <title>Sestrins activate Nrf2 by promoting p62-dependent autophagic degradation of Keap1 and prevent oxidative liver damage.</title>
        <authorList>
            <person name="Bae S.H."/>
            <person name="Sung S.H."/>
            <person name="Oh S.Y."/>
            <person name="Lim J.M."/>
            <person name="Lee S.K."/>
            <person name="Park Y.N."/>
            <person name="Lee H.E."/>
            <person name="Kang D."/>
            <person name="Rhee S.G."/>
        </authorList>
    </citation>
    <scope>FUNCTION</scope>
    <scope>DISRUPTION PHENOTYPE</scope>
</reference>
<reference key="5">
    <citation type="journal article" date="2014" name="Cell">
        <title>Sestrins function as guanine nucleotide dissociation inhibitors for Rag GTPases to control mTORC1 signaling.</title>
        <authorList>
            <person name="Peng M."/>
            <person name="Yin N."/>
            <person name="Li M.O."/>
        </authorList>
    </citation>
    <scope>FUNCTION</scope>
    <scope>INTERACTION WITH RRAGA; RRAGB; RRAGC AND RRAGD</scope>
    <scope>TISSUE SPECIFICITY</scope>
    <scope>DISRUPTION PHENOTYPE</scope>
    <scope>MUTAGENESIS OF ARG-419; LYS-422 AND LYS-426</scope>
</reference>
<reference key="6">
    <citation type="journal article" date="2014" name="FEBS J.">
        <title>Sestrin2 promotes Unc-51-like kinase 1 mediated phosphorylation of p62/sequestosome-1.</title>
        <authorList>
            <person name="Ro S.H."/>
            <person name="Semple I.A."/>
            <person name="Park H."/>
            <person name="Park H."/>
            <person name="Park H.W."/>
            <person name="Kim M."/>
            <person name="Kim J.S."/>
            <person name="Lee J.H."/>
        </authorList>
    </citation>
    <scope>INTERACTION WITH SQSTM1 AND ULK1</scope>
</reference>
<reference key="7">
    <citation type="journal article" date="2014" name="Nat. Commun.">
        <title>Hepatoprotective role of Sestrin2 against chronic ER stress.</title>
        <authorList>
            <person name="Park H.W."/>
            <person name="Park H."/>
            <person name="Ro S.H."/>
            <person name="Jang I."/>
            <person name="Semple I.A."/>
            <person name="Kim D.N."/>
            <person name="Kim M."/>
            <person name="Nam M."/>
            <person name="Zhang D."/>
            <person name="Yin L."/>
            <person name="Lee J.H."/>
        </authorList>
    </citation>
    <scope>FUNCTION</scope>
    <scope>INDUCTION</scope>
    <scope>DISRUPTION PHENOTYPE</scope>
</reference>
<reference key="8">
    <citation type="journal article" date="2015" name="Diabetes">
        <title>Sestrin 3 protein enhances hepatic insulin sensitivity by direct activation of the mTORC2-Akt signaling.</title>
        <authorList>
            <person name="Tao R."/>
            <person name="Xiong X."/>
            <person name="Liangpunsakul S."/>
            <person name="Dong X.C."/>
        </authorList>
    </citation>
    <scope>INTERACTION WITH TORC2 COMPLEX</scope>
</reference>